<evidence type="ECO:0000255" key="1">
    <source>
        <dbReference type="HAMAP-Rule" id="MF_00061"/>
    </source>
</evidence>
<sequence>MGERFHARTVRVKAPGKVNVSLSVGPLRPDGYHSVASVYLAVSLYEEVAATSTEAPGITVSISPDSTLDLDGVDIPLDQRNLAYKAAAIMAEMSEKPTGVHLEITKRVPVAGGMGGGSADAAATLLACDALWNSGLSREELAHLAAELGADVPFSLLGGTAVGLGVGDKLSPALAKAQMDWVLVFADYGLSTPDVFRTLDGLRDSEGVEIPEPVDVDPTILQALRKGDPETLSRVLINDLQRASITLAPQLRDTIGLGEARGALAGMVSGSGPTIALLARDSVSASVLAEELTHRGHNALAVHGPVPGARIISDTLL</sequence>
<name>ISPE_PAEAT</name>
<dbReference type="EC" id="2.7.1.148" evidence="1"/>
<dbReference type="EMBL" id="CP000474">
    <property type="protein sequence ID" value="ABM06709.1"/>
    <property type="molecule type" value="Genomic_DNA"/>
</dbReference>
<dbReference type="SMR" id="A1R4F8"/>
<dbReference type="STRING" id="290340.AAur_1338"/>
<dbReference type="KEGG" id="aau:AAur_1338"/>
<dbReference type="eggNOG" id="COG1947">
    <property type="taxonomic scope" value="Bacteria"/>
</dbReference>
<dbReference type="HOGENOM" id="CLU_053057_1_1_11"/>
<dbReference type="UniPathway" id="UPA00056">
    <property type="reaction ID" value="UER00094"/>
</dbReference>
<dbReference type="Proteomes" id="UP000000637">
    <property type="component" value="Chromosome"/>
</dbReference>
<dbReference type="GO" id="GO:0050515">
    <property type="term" value="F:4-(cytidine 5'-diphospho)-2-C-methyl-D-erythritol kinase activity"/>
    <property type="evidence" value="ECO:0007669"/>
    <property type="project" value="UniProtKB-UniRule"/>
</dbReference>
<dbReference type="GO" id="GO:0005524">
    <property type="term" value="F:ATP binding"/>
    <property type="evidence" value="ECO:0007669"/>
    <property type="project" value="UniProtKB-UniRule"/>
</dbReference>
<dbReference type="GO" id="GO:0019288">
    <property type="term" value="P:isopentenyl diphosphate biosynthetic process, methylerythritol 4-phosphate pathway"/>
    <property type="evidence" value="ECO:0007669"/>
    <property type="project" value="UniProtKB-UniRule"/>
</dbReference>
<dbReference type="GO" id="GO:0016114">
    <property type="term" value="P:terpenoid biosynthetic process"/>
    <property type="evidence" value="ECO:0007669"/>
    <property type="project" value="InterPro"/>
</dbReference>
<dbReference type="Gene3D" id="3.30.230.10">
    <property type="match status" value="1"/>
</dbReference>
<dbReference type="Gene3D" id="3.30.70.890">
    <property type="entry name" value="GHMP kinase, C-terminal domain"/>
    <property type="match status" value="1"/>
</dbReference>
<dbReference type="HAMAP" id="MF_00061">
    <property type="entry name" value="IspE"/>
    <property type="match status" value="1"/>
</dbReference>
<dbReference type="InterPro" id="IPR013750">
    <property type="entry name" value="GHMP_kinase_C_dom"/>
</dbReference>
<dbReference type="InterPro" id="IPR036554">
    <property type="entry name" value="GHMP_kinase_C_sf"/>
</dbReference>
<dbReference type="InterPro" id="IPR006204">
    <property type="entry name" value="GHMP_kinase_N_dom"/>
</dbReference>
<dbReference type="InterPro" id="IPR004424">
    <property type="entry name" value="IspE"/>
</dbReference>
<dbReference type="InterPro" id="IPR020568">
    <property type="entry name" value="Ribosomal_Su5_D2-typ_SF"/>
</dbReference>
<dbReference type="InterPro" id="IPR014721">
    <property type="entry name" value="Ribsml_uS5_D2-typ_fold_subgr"/>
</dbReference>
<dbReference type="NCBIfam" id="TIGR00154">
    <property type="entry name" value="ispE"/>
    <property type="match status" value="1"/>
</dbReference>
<dbReference type="NCBIfam" id="NF002870">
    <property type="entry name" value="PRK03188.1"/>
    <property type="match status" value="1"/>
</dbReference>
<dbReference type="PANTHER" id="PTHR43527">
    <property type="entry name" value="4-DIPHOSPHOCYTIDYL-2-C-METHYL-D-ERYTHRITOL KINASE, CHLOROPLASTIC"/>
    <property type="match status" value="1"/>
</dbReference>
<dbReference type="PANTHER" id="PTHR43527:SF2">
    <property type="entry name" value="4-DIPHOSPHOCYTIDYL-2-C-METHYL-D-ERYTHRITOL KINASE, CHLOROPLASTIC"/>
    <property type="match status" value="1"/>
</dbReference>
<dbReference type="Pfam" id="PF08544">
    <property type="entry name" value="GHMP_kinases_C"/>
    <property type="match status" value="1"/>
</dbReference>
<dbReference type="Pfam" id="PF00288">
    <property type="entry name" value="GHMP_kinases_N"/>
    <property type="match status" value="1"/>
</dbReference>
<dbReference type="PIRSF" id="PIRSF010376">
    <property type="entry name" value="IspE"/>
    <property type="match status" value="1"/>
</dbReference>
<dbReference type="SUPFAM" id="SSF55060">
    <property type="entry name" value="GHMP Kinase, C-terminal domain"/>
    <property type="match status" value="1"/>
</dbReference>
<dbReference type="SUPFAM" id="SSF54211">
    <property type="entry name" value="Ribosomal protein S5 domain 2-like"/>
    <property type="match status" value="1"/>
</dbReference>
<organism>
    <name type="scientific">Paenarthrobacter aurescens (strain TC1)</name>
    <dbReference type="NCBI Taxonomy" id="290340"/>
    <lineage>
        <taxon>Bacteria</taxon>
        <taxon>Bacillati</taxon>
        <taxon>Actinomycetota</taxon>
        <taxon>Actinomycetes</taxon>
        <taxon>Micrococcales</taxon>
        <taxon>Micrococcaceae</taxon>
        <taxon>Paenarthrobacter</taxon>
    </lineage>
</organism>
<proteinExistence type="inferred from homology"/>
<gene>
    <name evidence="1" type="primary">ispE</name>
    <name type="ordered locus">AAur_1338</name>
</gene>
<accession>A1R4F8</accession>
<reference key="1">
    <citation type="journal article" date="2006" name="PLoS Genet.">
        <title>Secrets of soil survival revealed by the genome sequence of Arthrobacter aurescens TC1.</title>
        <authorList>
            <person name="Mongodin E.F."/>
            <person name="Shapir N."/>
            <person name="Daugherty S.C."/>
            <person name="DeBoy R.T."/>
            <person name="Emerson J.B."/>
            <person name="Shvartzbeyn A."/>
            <person name="Radune D."/>
            <person name="Vamathevan J."/>
            <person name="Riggs F."/>
            <person name="Grinberg V."/>
            <person name="Khouri H.M."/>
            <person name="Wackett L.P."/>
            <person name="Nelson K.E."/>
            <person name="Sadowsky M.J."/>
        </authorList>
    </citation>
    <scope>NUCLEOTIDE SEQUENCE [LARGE SCALE GENOMIC DNA]</scope>
    <source>
        <strain>TC1</strain>
    </source>
</reference>
<feature type="chain" id="PRO_0000335698" description="4-diphosphocytidyl-2-C-methyl-D-erythritol kinase">
    <location>
        <begin position="1"/>
        <end position="317"/>
    </location>
</feature>
<feature type="active site" evidence="1">
    <location>
        <position position="17"/>
    </location>
</feature>
<feature type="active site" evidence="1">
    <location>
        <position position="151"/>
    </location>
</feature>
<feature type="binding site" evidence="1">
    <location>
        <begin position="109"/>
        <end position="119"/>
    </location>
    <ligand>
        <name>ATP</name>
        <dbReference type="ChEBI" id="CHEBI:30616"/>
    </ligand>
</feature>
<comment type="function">
    <text evidence="1">Catalyzes the phosphorylation of the position 2 hydroxy group of 4-diphosphocytidyl-2C-methyl-D-erythritol.</text>
</comment>
<comment type="catalytic activity">
    <reaction evidence="1">
        <text>4-CDP-2-C-methyl-D-erythritol + ATP = 4-CDP-2-C-methyl-D-erythritol 2-phosphate + ADP + H(+)</text>
        <dbReference type="Rhea" id="RHEA:18437"/>
        <dbReference type="ChEBI" id="CHEBI:15378"/>
        <dbReference type="ChEBI" id="CHEBI:30616"/>
        <dbReference type="ChEBI" id="CHEBI:57823"/>
        <dbReference type="ChEBI" id="CHEBI:57919"/>
        <dbReference type="ChEBI" id="CHEBI:456216"/>
        <dbReference type="EC" id="2.7.1.148"/>
    </reaction>
</comment>
<comment type="pathway">
    <text evidence="1">Isoprenoid biosynthesis; isopentenyl diphosphate biosynthesis via DXP pathway; isopentenyl diphosphate from 1-deoxy-D-xylulose 5-phosphate: step 3/6.</text>
</comment>
<comment type="similarity">
    <text evidence="1">Belongs to the GHMP kinase family. IspE subfamily.</text>
</comment>
<protein>
    <recommendedName>
        <fullName evidence="1">4-diphosphocytidyl-2-C-methyl-D-erythritol kinase</fullName>
        <shortName evidence="1">CMK</shortName>
        <ecNumber evidence="1">2.7.1.148</ecNumber>
    </recommendedName>
    <alternativeName>
        <fullName evidence="1">4-(cytidine-5'-diphospho)-2-C-methyl-D-erythritol kinase</fullName>
    </alternativeName>
</protein>
<keyword id="KW-0067">ATP-binding</keyword>
<keyword id="KW-0414">Isoprene biosynthesis</keyword>
<keyword id="KW-0418">Kinase</keyword>
<keyword id="KW-0547">Nucleotide-binding</keyword>
<keyword id="KW-0808">Transferase</keyword>